<sequence>MRFIIRTVMLIALVWIGLLLSGYGVLIGSKENAAELGLQCTYLTARGTSTVQYLHTKSGFLGITDCPLLRKSNIVVDNG</sequence>
<organism>
    <name type="scientific">Escherichia coli O157:H7</name>
    <dbReference type="NCBI Taxonomy" id="83334"/>
    <lineage>
        <taxon>Bacteria</taxon>
        <taxon>Pseudomonadati</taxon>
        <taxon>Pseudomonadota</taxon>
        <taxon>Gammaproteobacteria</taxon>
        <taxon>Enterobacterales</taxon>
        <taxon>Enterobacteriaceae</taxon>
        <taxon>Escherichia</taxon>
    </lineage>
</organism>
<accession>Q8X4G6</accession>
<name>YOBH_ECO57</name>
<proteinExistence type="inferred from homology"/>
<reference key="1">
    <citation type="journal article" date="2001" name="Nature">
        <title>Genome sequence of enterohaemorrhagic Escherichia coli O157:H7.</title>
        <authorList>
            <person name="Perna N.T."/>
            <person name="Plunkett G. III"/>
            <person name="Burland V."/>
            <person name="Mau B."/>
            <person name="Glasner J.D."/>
            <person name="Rose D.J."/>
            <person name="Mayhew G.F."/>
            <person name="Evans P.S."/>
            <person name="Gregor J."/>
            <person name="Kirkpatrick H.A."/>
            <person name="Posfai G."/>
            <person name="Hackett J."/>
            <person name="Klink S."/>
            <person name="Boutin A."/>
            <person name="Shao Y."/>
            <person name="Miller L."/>
            <person name="Grotbeck E.J."/>
            <person name="Davis N.W."/>
            <person name="Lim A."/>
            <person name="Dimalanta E.T."/>
            <person name="Potamousis K."/>
            <person name="Apodaca J."/>
            <person name="Anantharaman T.S."/>
            <person name="Lin J."/>
            <person name="Yen G."/>
            <person name="Schwartz D.C."/>
            <person name="Welch R.A."/>
            <person name="Blattner F.R."/>
        </authorList>
    </citation>
    <scope>NUCLEOTIDE SEQUENCE [LARGE SCALE GENOMIC DNA]</scope>
    <source>
        <strain>O157:H7 / EDL933 / ATCC 700927 / EHEC</strain>
    </source>
</reference>
<reference key="2">
    <citation type="journal article" date="2001" name="DNA Res.">
        <title>Complete genome sequence of enterohemorrhagic Escherichia coli O157:H7 and genomic comparison with a laboratory strain K-12.</title>
        <authorList>
            <person name="Hayashi T."/>
            <person name="Makino K."/>
            <person name="Ohnishi M."/>
            <person name="Kurokawa K."/>
            <person name="Ishii K."/>
            <person name="Yokoyama K."/>
            <person name="Han C.-G."/>
            <person name="Ohtsubo E."/>
            <person name="Nakayama K."/>
            <person name="Murata T."/>
            <person name="Tanaka M."/>
            <person name="Tobe T."/>
            <person name="Iida T."/>
            <person name="Takami H."/>
            <person name="Honda T."/>
            <person name="Sasakawa C."/>
            <person name="Ogasawara N."/>
            <person name="Yasunaga T."/>
            <person name="Kuhara S."/>
            <person name="Shiba T."/>
            <person name="Hattori M."/>
            <person name="Shinagawa H."/>
        </authorList>
    </citation>
    <scope>NUCLEOTIDE SEQUENCE [LARGE SCALE GENOMIC DNA]</scope>
    <source>
        <strain>O157:H7 / Sakai / RIMD 0509952 / EHEC</strain>
    </source>
</reference>
<gene>
    <name type="primary">yobH</name>
    <name type="ordered locus">Z2873</name>
    <name type="ordered locus">ECs2536.1</name>
</gene>
<protein>
    <recommendedName>
        <fullName>Uncharacterized protein YobH</fullName>
    </recommendedName>
</protein>
<evidence type="ECO:0000255" key="1"/>
<feature type="signal peptide" evidence="1">
    <location>
        <begin position="1"/>
        <end position="33"/>
    </location>
</feature>
<feature type="chain" id="PRO_0000259705" description="Uncharacterized protein YobH">
    <location>
        <begin position="34"/>
        <end position="79"/>
    </location>
</feature>
<keyword id="KW-1185">Reference proteome</keyword>
<keyword id="KW-0732">Signal</keyword>
<dbReference type="EMBL" id="AE005174">
    <property type="protein sequence ID" value="AAG56816.1"/>
    <property type="molecule type" value="Genomic_DNA"/>
</dbReference>
<dbReference type="EMBL" id="BA000007">
    <property type="status" value="NOT_ANNOTATED_CDS"/>
    <property type="molecule type" value="Genomic_DNA"/>
</dbReference>
<dbReference type="PIR" id="D85794">
    <property type="entry name" value="D85794"/>
</dbReference>
<dbReference type="RefSeq" id="WP_001211007.1">
    <property type="nucleotide sequence ID" value="NZ_VOAI01000010.1"/>
</dbReference>
<dbReference type="STRING" id="155864.Z2873"/>
<dbReference type="KEGG" id="ece:Z2873"/>
<dbReference type="PATRIC" id="fig|83334.175.peg.2006"/>
<dbReference type="eggNOG" id="ENOG5032T57">
    <property type="taxonomic scope" value="Bacteria"/>
</dbReference>
<dbReference type="OMA" id="WLAMLFT"/>
<dbReference type="Proteomes" id="UP000000558">
    <property type="component" value="Chromosome"/>
</dbReference>
<dbReference type="Proteomes" id="UP000002519">
    <property type="component" value="Chromosome"/>
</dbReference>
<dbReference type="InterPro" id="IPR025611">
    <property type="entry name" value="YobH"/>
</dbReference>
<dbReference type="Pfam" id="PF13996">
    <property type="entry name" value="YobH"/>
    <property type="match status" value="1"/>
</dbReference>